<organism>
    <name type="scientific">Frankia alni (strain DSM 45986 / CECT 9034 / ACN14a)</name>
    <dbReference type="NCBI Taxonomy" id="326424"/>
    <lineage>
        <taxon>Bacteria</taxon>
        <taxon>Bacillati</taxon>
        <taxon>Actinomycetota</taxon>
        <taxon>Actinomycetes</taxon>
        <taxon>Frankiales</taxon>
        <taxon>Frankiaceae</taxon>
        <taxon>Frankia</taxon>
    </lineage>
</organism>
<gene>
    <name evidence="1" type="primary">ispG</name>
    <name type="ordered locus">FRAAL5772</name>
</gene>
<dbReference type="EC" id="1.17.7.3" evidence="1"/>
<dbReference type="EMBL" id="CT573213">
    <property type="protein sequence ID" value="CAJ64404.1"/>
    <property type="molecule type" value="Genomic_DNA"/>
</dbReference>
<dbReference type="RefSeq" id="WP_009742347.1">
    <property type="nucleotide sequence ID" value="NC_008278.1"/>
</dbReference>
<dbReference type="SMR" id="Q0RDR2"/>
<dbReference type="STRING" id="326424.FRAAL5772"/>
<dbReference type="KEGG" id="fal:FRAAL5772"/>
<dbReference type="eggNOG" id="COG0821">
    <property type="taxonomic scope" value="Bacteria"/>
</dbReference>
<dbReference type="HOGENOM" id="CLU_042258_0_0_11"/>
<dbReference type="OrthoDB" id="9803214at2"/>
<dbReference type="UniPathway" id="UPA00056">
    <property type="reaction ID" value="UER00096"/>
</dbReference>
<dbReference type="Proteomes" id="UP000000657">
    <property type="component" value="Chromosome"/>
</dbReference>
<dbReference type="GO" id="GO:0051539">
    <property type="term" value="F:4 iron, 4 sulfur cluster binding"/>
    <property type="evidence" value="ECO:0007669"/>
    <property type="project" value="UniProtKB-UniRule"/>
</dbReference>
<dbReference type="GO" id="GO:0046429">
    <property type="term" value="F:4-hydroxy-3-methylbut-2-en-1-yl diphosphate synthase activity (ferredoxin)"/>
    <property type="evidence" value="ECO:0007669"/>
    <property type="project" value="UniProtKB-UniRule"/>
</dbReference>
<dbReference type="GO" id="GO:0141197">
    <property type="term" value="F:4-hydroxy-3-methylbut-2-enyl-diphosphate synthase activity (flavodoxin)"/>
    <property type="evidence" value="ECO:0007669"/>
    <property type="project" value="UniProtKB-EC"/>
</dbReference>
<dbReference type="GO" id="GO:0005506">
    <property type="term" value="F:iron ion binding"/>
    <property type="evidence" value="ECO:0007669"/>
    <property type="project" value="InterPro"/>
</dbReference>
<dbReference type="GO" id="GO:0019288">
    <property type="term" value="P:isopentenyl diphosphate biosynthetic process, methylerythritol 4-phosphate pathway"/>
    <property type="evidence" value="ECO:0007669"/>
    <property type="project" value="UniProtKB-UniRule"/>
</dbReference>
<dbReference type="GO" id="GO:0016114">
    <property type="term" value="P:terpenoid biosynthetic process"/>
    <property type="evidence" value="ECO:0007669"/>
    <property type="project" value="InterPro"/>
</dbReference>
<dbReference type="FunFam" id="3.20.20.20:FF:000001">
    <property type="entry name" value="4-hydroxy-3-methylbut-2-en-1-yl diphosphate synthase (flavodoxin)"/>
    <property type="match status" value="1"/>
</dbReference>
<dbReference type="FunFam" id="3.30.413.10:FF:000001">
    <property type="entry name" value="4-hydroxy-3-methylbut-2-en-1-yl diphosphate synthase (flavodoxin)"/>
    <property type="match status" value="1"/>
</dbReference>
<dbReference type="Gene3D" id="3.20.20.20">
    <property type="entry name" value="Dihydropteroate synthase-like"/>
    <property type="match status" value="1"/>
</dbReference>
<dbReference type="Gene3D" id="3.30.413.10">
    <property type="entry name" value="Sulfite Reductase Hemoprotein, domain 1"/>
    <property type="match status" value="1"/>
</dbReference>
<dbReference type="HAMAP" id="MF_00159">
    <property type="entry name" value="IspG"/>
    <property type="match status" value="1"/>
</dbReference>
<dbReference type="InterPro" id="IPR011005">
    <property type="entry name" value="Dihydropteroate_synth-like_sf"/>
</dbReference>
<dbReference type="InterPro" id="IPR016425">
    <property type="entry name" value="IspG_bac"/>
</dbReference>
<dbReference type="InterPro" id="IPR004588">
    <property type="entry name" value="IspG_bac-typ"/>
</dbReference>
<dbReference type="InterPro" id="IPR045854">
    <property type="entry name" value="NO2/SO3_Rdtase_4Fe4S_sf"/>
</dbReference>
<dbReference type="NCBIfam" id="TIGR00612">
    <property type="entry name" value="ispG_gcpE"/>
    <property type="match status" value="1"/>
</dbReference>
<dbReference type="NCBIfam" id="NF001540">
    <property type="entry name" value="PRK00366.1"/>
    <property type="match status" value="1"/>
</dbReference>
<dbReference type="PANTHER" id="PTHR30454">
    <property type="entry name" value="4-HYDROXY-3-METHYLBUT-2-EN-1-YL DIPHOSPHATE SYNTHASE"/>
    <property type="match status" value="1"/>
</dbReference>
<dbReference type="PANTHER" id="PTHR30454:SF0">
    <property type="entry name" value="4-HYDROXY-3-METHYLBUT-2-EN-1-YL DIPHOSPHATE SYNTHASE (FERREDOXIN), CHLOROPLASTIC"/>
    <property type="match status" value="1"/>
</dbReference>
<dbReference type="Pfam" id="PF04551">
    <property type="entry name" value="GcpE"/>
    <property type="match status" value="1"/>
</dbReference>
<dbReference type="PIRSF" id="PIRSF004640">
    <property type="entry name" value="IspG"/>
    <property type="match status" value="1"/>
</dbReference>
<dbReference type="SUPFAM" id="SSF51717">
    <property type="entry name" value="Dihydropteroate synthetase-like"/>
    <property type="match status" value="1"/>
</dbReference>
<dbReference type="SUPFAM" id="SSF56014">
    <property type="entry name" value="Nitrite and sulphite reductase 4Fe-4S domain-like"/>
    <property type="match status" value="1"/>
</dbReference>
<proteinExistence type="inferred from homology"/>
<keyword id="KW-0004">4Fe-4S</keyword>
<keyword id="KW-0408">Iron</keyword>
<keyword id="KW-0411">Iron-sulfur</keyword>
<keyword id="KW-0414">Isoprene biosynthesis</keyword>
<keyword id="KW-0479">Metal-binding</keyword>
<keyword id="KW-0560">Oxidoreductase</keyword>
<keyword id="KW-1185">Reference proteome</keyword>
<reference key="1">
    <citation type="journal article" date="2007" name="Genome Res.">
        <title>Genome characteristics of facultatively symbiotic Frankia sp. strains reflect host range and host plant biogeography.</title>
        <authorList>
            <person name="Normand P."/>
            <person name="Lapierre P."/>
            <person name="Tisa L.S."/>
            <person name="Gogarten J.P."/>
            <person name="Alloisio N."/>
            <person name="Bagnarol E."/>
            <person name="Bassi C.A."/>
            <person name="Berry A.M."/>
            <person name="Bickhart D.M."/>
            <person name="Choisne N."/>
            <person name="Couloux A."/>
            <person name="Cournoyer B."/>
            <person name="Cruveiller S."/>
            <person name="Daubin V."/>
            <person name="Demange N."/>
            <person name="Francino M.P."/>
            <person name="Goltsman E."/>
            <person name="Huang Y."/>
            <person name="Kopp O.R."/>
            <person name="Labarre L."/>
            <person name="Lapidus A."/>
            <person name="Lavire C."/>
            <person name="Marechal J."/>
            <person name="Martinez M."/>
            <person name="Mastronunzio J.E."/>
            <person name="Mullin B.C."/>
            <person name="Niemann J."/>
            <person name="Pujic P."/>
            <person name="Rawnsley T."/>
            <person name="Rouy Z."/>
            <person name="Schenowitz C."/>
            <person name="Sellstedt A."/>
            <person name="Tavares F."/>
            <person name="Tomkins J.P."/>
            <person name="Vallenet D."/>
            <person name="Valverde C."/>
            <person name="Wall L.G."/>
            <person name="Wang Y."/>
            <person name="Medigue C."/>
            <person name="Benson D.R."/>
        </authorList>
    </citation>
    <scope>NUCLEOTIDE SEQUENCE [LARGE SCALE GENOMIC DNA]</scope>
    <source>
        <strain>DSM 45986 / CECT 9034 / ACN14a</strain>
    </source>
</reference>
<sequence>MTVTLGMPAAPARPLGTRRHSRQINVGNVPVGGDAPVSVQSMCTTLTSDVNATLQQIAQLTASGCQIVRVAVPSQDDADALAAIARKSPIPVIADIHFQPKYVFAAIDAGCAAVRVNPGNIKAFDDKVGEIARAAKGAGIPIRIGVNAGSLDKRLLAKYGKATPEALTESALWECSLFEEHDFRDIKISVKHHDPVVMIQAYRLLAQSCDYPLHLGVTEAGPAFQGTVKSSVAFGALLAEGIGDTIRVSLSAPPVEEVKVGTAILESLGLRQRKLEIVSCPSCGRAQVDVYTLANQVSAGLEGMEVPLRVAVMGCVVNGPGEAREADLGVASGNGKGQIFVKGEVVKTVPEAQIVETLIEEAMRLAEEMTADGTPSGEPSVTVS</sequence>
<feature type="chain" id="PRO_1000123447" description="4-hydroxy-3-methylbut-2-en-1-yl diphosphate synthase (flavodoxin)">
    <location>
        <begin position="1"/>
        <end position="384"/>
    </location>
</feature>
<feature type="binding site" evidence="1">
    <location>
        <position position="280"/>
    </location>
    <ligand>
        <name>[4Fe-4S] cluster</name>
        <dbReference type="ChEBI" id="CHEBI:49883"/>
    </ligand>
</feature>
<feature type="binding site" evidence="1">
    <location>
        <position position="283"/>
    </location>
    <ligand>
        <name>[4Fe-4S] cluster</name>
        <dbReference type="ChEBI" id="CHEBI:49883"/>
    </ligand>
</feature>
<feature type="binding site" evidence="1">
    <location>
        <position position="315"/>
    </location>
    <ligand>
        <name>[4Fe-4S] cluster</name>
        <dbReference type="ChEBI" id="CHEBI:49883"/>
    </ligand>
</feature>
<feature type="binding site" evidence="1">
    <location>
        <position position="322"/>
    </location>
    <ligand>
        <name>[4Fe-4S] cluster</name>
        <dbReference type="ChEBI" id="CHEBI:49883"/>
    </ligand>
</feature>
<comment type="function">
    <text evidence="1">Converts 2C-methyl-D-erythritol 2,4-cyclodiphosphate (ME-2,4cPP) into 1-hydroxy-2-methyl-2-(E)-butenyl 4-diphosphate.</text>
</comment>
<comment type="catalytic activity">
    <reaction evidence="1">
        <text>(2E)-4-hydroxy-3-methylbut-2-enyl diphosphate + oxidized [flavodoxin] + H2O + 2 H(+) = 2-C-methyl-D-erythritol 2,4-cyclic diphosphate + reduced [flavodoxin]</text>
        <dbReference type="Rhea" id="RHEA:43604"/>
        <dbReference type="Rhea" id="RHEA-COMP:10622"/>
        <dbReference type="Rhea" id="RHEA-COMP:10623"/>
        <dbReference type="ChEBI" id="CHEBI:15377"/>
        <dbReference type="ChEBI" id="CHEBI:15378"/>
        <dbReference type="ChEBI" id="CHEBI:57618"/>
        <dbReference type="ChEBI" id="CHEBI:58210"/>
        <dbReference type="ChEBI" id="CHEBI:58483"/>
        <dbReference type="ChEBI" id="CHEBI:128753"/>
        <dbReference type="EC" id="1.17.7.3"/>
    </reaction>
</comment>
<comment type="cofactor">
    <cofactor evidence="1">
        <name>[4Fe-4S] cluster</name>
        <dbReference type="ChEBI" id="CHEBI:49883"/>
    </cofactor>
    <text evidence="1">Binds 1 [4Fe-4S] cluster.</text>
</comment>
<comment type="pathway">
    <text evidence="1">Isoprenoid biosynthesis; isopentenyl diphosphate biosynthesis via DXP pathway; isopentenyl diphosphate from 1-deoxy-D-xylulose 5-phosphate: step 5/6.</text>
</comment>
<comment type="similarity">
    <text evidence="1">Belongs to the IspG family.</text>
</comment>
<name>ISPG_FRAAA</name>
<accession>Q0RDR2</accession>
<protein>
    <recommendedName>
        <fullName evidence="1">4-hydroxy-3-methylbut-2-en-1-yl diphosphate synthase (flavodoxin)</fullName>
        <ecNumber evidence="1">1.17.7.3</ecNumber>
    </recommendedName>
    <alternativeName>
        <fullName evidence="1">1-hydroxy-2-methyl-2-(E)-butenyl 4-diphosphate synthase</fullName>
    </alternativeName>
</protein>
<evidence type="ECO:0000255" key="1">
    <source>
        <dbReference type="HAMAP-Rule" id="MF_00159"/>
    </source>
</evidence>